<feature type="chain" id="PRO_1000010091" description="DNA mismatch repair protein MutL">
    <location>
        <begin position="1"/>
        <end position="660"/>
    </location>
</feature>
<keyword id="KW-0227">DNA damage</keyword>
<keyword id="KW-0234">DNA repair</keyword>
<reference key="1">
    <citation type="journal article" date="2006" name="Proc. Natl. Acad. Sci. U.S.A.">
        <title>Molecular genetic anatomy of inter- and intraserotype variation in the human bacterial pathogen group A Streptococcus.</title>
        <authorList>
            <person name="Beres S.B."/>
            <person name="Richter E.W."/>
            <person name="Nagiec M.J."/>
            <person name="Sumby P."/>
            <person name="Porcella S.F."/>
            <person name="DeLeo F.R."/>
            <person name="Musser J.M."/>
        </authorList>
    </citation>
    <scope>NUCLEOTIDE SEQUENCE [LARGE SCALE GENOMIC DNA]</scope>
    <source>
        <strain>MGAS2096</strain>
    </source>
</reference>
<comment type="function">
    <text evidence="1">This protein is involved in the repair of mismatches in DNA. It is required for dam-dependent methyl-directed DNA mismatch repair. May act as a 'molecular matchmaker', a protein that promotes the formation of a stable complex between two or more DNA-binding proteins in an ATP-dependent manner without itself being part of a final effector complex.</text>
</comment>
<comment type="similarity">
    <text evidence="1">Belongs to the DNA mismatch repair MutL/HexB family.</text>
</comment>
<sequence>MTNIIELPEVLANQIAAGEVVERPASVVKELVENAIDAKSSQITVEIEESGLKMIQVTDNGEGMSHEDLPLSLRRHATSKIKSQSDLFRIRTLGFRGEALPSVASISKITIKTATKEVTHGSLLIATGGEIETLEAISTPTGTKIKVENLFYNTPARLKYMKSLQAELAHIVDVVNRLSLAHPEVAFTLISDGRQLTQTSGTGDLRQAIAGIYGLNTTKKMLVISNADLDFEVSGYVSLPELTRANRNYMTILVNGRYIKNFLLNRAILDGYGSKLMVGRFPIVVIDIQIDPYLADVNVHPTKQEVRISKERELMALISTAISESLKEQDLIPDALENLAKSSTRHFSKPEQTQLPLQSRGLYYDPQKNDFFVKESAVSEKIPETDFYSGAVDNSVKVEKAELLPHSEEVIGPSSVKHASRPQNTFTETDHPNLDLKNRQKLSQMLNRLENEEQSVFPELDYFGQMHGTYLFAQGKDGLFIIDQHAAQERVKYEYYRDKIGDVDSSLQQLLVPYLFEFSGSDFINLQEKMALLNEVGIFLEVYGHNTFILREHPIWMKEEEIASGVYEMCDMLLLTNEVSIKTYRAELAIMMSCKRSIKANHSLDDYSARNLLLQLAQCQNPYNCPHGRPVLINFSKADMEKMFRRIQENHTSLRELGKY</sequence>
<organism>
    <name type="scientific">Streptococcus pyogenes serotype M12 (strain MGAS2096)</name>
    <dbReference type="NCBI Taxonomy" id="370553"/>
    <lineage>
        <taxon>Bacteria</taxon>
        <taxon>Bacillati</taxon>
        <taxon>Bacillota</taxon>
        <taxon>Bacilli</taxon>
        <taxon>Lactobacillales</taxon>
        <taxon>Streptococcaceae</taxon>
        <taxon>Streptococcus</taxon>
    </lineage>
</organism>
<evidence type="ECO:0000255" key="1">
    <source>
        <dbReference type="HAMAP-Rule" id="MF_00149"/>
    </source>
</evidence>
<gene>
    <name evidence="1" type="primary">mutL</name>
    <name type="ordered locus">MGAS2096_Spy1837</name>
</gene>
<dbReference type="EMBL" id="CP000261">
    <property type="protein sequence ID" value="ABF36889.1"/>
    <property type="molecule type" value="Genomic_DNA"/>
</dbReference>
<dbReference type="SMR" id="Q1J9C2"/>
<dbReference type="KEGG" id="spj:MGAS2096_Spy1837"/>
<dbReference type="HOGENOM" id="CLU_004131_4_1_9"/>
<dbReference type="GO" id="GO:0032300">
    <property type="term" value="C:mismatch repair complex"/>
    <property type="evidence" value="ECO:0007669"/>
    <property type="project" value="InterPro"/>
</dbReference>
<dbReference type="GO" id="GO:0005524">
    <property type="term" value="F:ATP binding"/>
    <property type="evidence" value="ECO:0007669"/>
    <property type="project" value="InterPro"/>
</dbReference>
<dbReference type="GO" id="GO:0016887">
    <property type="term" value="F:ATP hydrolysis activity"/>
    <property type="evidence" value="ECO:0007669"/>
    <property type="project" value="InterPro"/>
</dbReference>
<dbReference type="GO" id="GO:0140664">
    <property type="term" value="F:ATP-dependent DNA damage sensor activity"/>
    <property type="evidence" value="ECO:0007669"/>
    <property type="project" value="InterPro"/>
</dbReference>
<dbReference type="GO" id="GO:0030983">
    <property type="term" value="F:mismatched DNA binding"/>
    <property type="evidence" value="ECO:0007669"/>
    <property type="project" value="InterPro"/>
</dbReference>
<dbReference type="GO" id="GO:0006298">
    <property type="term" value="P:mismatch repair"/>
    <property type="evidence" value="ECO:0007669"/>
    <property type="project" value="UniProtKB-UniRule"/>
</dbReference>
<dbReference type="CDD" id="cd16926">
    <property type="entry name" value="HATPase_MutL-MLH-PMS-like"/>
    <property type="match status" value="1"/>
</dbReference>
<dbReference type="CDD" id="cd00782">
    <property type="entry name" value="MutL_Trans"/>
    <property type="match status" value="1"/>
</dbReference>
<dbReference type="FunFam" id="3.30.1370.100:FF:000004">
    <property type="entry name" value="DNA mismatch repair endonuclease MutL"/>
    <property type="match status" value="1"/>
</dbReference>
<dbReference type="FunFam" id="3.30.565.10:FF:000003">
    <property type="entry name" value="DNA mismatch repair endonuclease MutL"/>
    <property type="match status" value="1"/>
</dbReference>
<dbReference type="Gene3D" id="3.30.230.10">
    <property type="match status" value="1"/>
</dbReference>
<dbReference type="Gene3D" id="3.30.565.10">
    <property type="entry name" value="Histidine kinase-like ATPase, C-terminal domain"/>
    <property type="match status" value="1"/>
</dbReference>
<dbReference type="Gene3D" id="3.30.1540.20">
    <property type="entry name" value="MutL, C-terminal domain, dimerisation subdomain"/>
    <property type="match status" value="1"/>
</dbReference>
<dbReference type="Gene3D" id="3.30.1370.100">
    <property type="entry name" value="MutL, C-terminal domain, regulatory subdomain"/>
    <property type="match status" value="1"/>
</dbReference>
<dbReference type="HAMAP" id="MF_00149">
    <property type="entry name" value="DNA_mis_repair"/>
    <property type="match status" value="1"/>
</dbReference>
<dbReference type="InterPro" id="IPR014762">
    <property type="entry name" value="DNA_mismatch_repair_CS"/>
</dbReference>
<dbReference type="InterPro" id="IPR020667">
    <property type="entry name" value="DNA_mismatch_repair_MutL"/>
</dbReference>
<dbReference type="InterPro" id="IPR013507">
    <property type="entry name" value="DNA_mismatch_S5_2-like"/>
</dbReference>
<dbReference type="InterPro" id="IPR036890">
    <property type="entry name" value="HATPase_C_sf"/>
</dbReference>
<dbReference type="InterPro" id="IPR002099">
    <property type="entry name" value="MutL/Mlh/PMS"/>
</dbReference>
<dbReference type="InterPro" id="IPR038973">
    <property type="entry name" value="MutL/Mlh/Pms-like"/>
</dbReference>
<dbReference type="InterPro" id="IPR014790">
    <property type="entry name" value="MutL_C"/>
</dbReference>
<dbReference type="InterPro" id="IPR042120">
    <property type="entry name" value="MutL_C_dimsub"/>
</dbReference>
<dbReference type="InterPro" id="IPR042121">
    <property type="entry name" value="MutL_C_regsub"/>
</dbReference>
<dbReference type="InterPro" id="IPR037198">
    <property type="entry name" value="MutL_C_sf"/>
</dbReference>
<dbReference type="InterPro" id="IPR020568">
    <property type="entry name" value="Ribosomal_Su5_D2-typ_SF"/>
</dbReference>
<dbReference type="InterPro" id="IPR014721">
    <property type="entry name" value="Ribsml_uS5_D2-typ_fold_subgr"/>
</dbReference>
<dbReference type="NCBIfam" id="TIGR00585">
    <property type="entry name" value="mutl"/>
    <property type="match status" value="1"/>
</dbReference>
<dbReference type="NCBIfam" id="NF000950">
    <property type="entry name" value="PRK00095.1-3"/>
    <property type="match status" value="1"/>
</dbReference>
<dbReference type="PANTHER" id="PTHR10073">
    <property type="entry name" value="DNA MISMATCH REPAIR PROTEIN MLH, PMS, MUTL"/>
    <property type="match status" value="1"/>
</dbReference>
<dbReference type="PANTHER" id="PTHR10073:SF12">
    <property type="entry name" value="DNA MISMATCH REPAIR PROTEIN MLH1"/>
    <property type="match status" value="1"/>
</dbReference>
<dbReference type="Pfam" id="PF01119">
    <property type="entry name" value="DNA_mis_repair"/>
    <property type="match status" value="1"/>
</dbReference>
<dbReference type="Pfam" id="PF13589">
    <property type="entry name" value="HATPase_c_3"/>
    <property type="match status" value="1"/>
</dbReference>
<dbReference type="Pfam" id="PF08676">
    <property type="entry name" value="MutL_C"/>
    <property type="match status" value="1"/>
</dbReference>
<dbReference type="SMART" id="SM01340">
    <property type="entry name" value="DNA_mis_repair"/>
    <property type="match status" value="1"/>
</dbReference>
<dbReference type="SMART" id="SM00853">
    <property type="entry name" value="MutL_C"/>
    <property type="match status" value="1"/>
</dbReference>
<dbReference type="SUPFAM" id="SSF55874">
    <property type="entry name" value="ATPase domain of HSP90 chaperone/DNA topoisomerase II/histidine kinase"/>
    <property type="match status" value="1"/>
</dbReference>
<dbReference type="SUPFAM" id="SSF118116">
    <property type="entry name" value="DNA mismatch repair protein MutL"/>
    <property type="match status" value="1"/>
</dbReference>
<dbReference type="SUPFAM" id="SSF54211">
    <property type="entry name" value="Ribosomal protein S5 domain 2-like"/>
    <property type="match status" value="1"/>
</dbReference>
<dbReference type="PROSITE" id="PS00058">
    <property type="entry name" value="DNA_MISMATCH_REPAIR_1"/>
    <property type="match status" value="1"/>
</dbReference>
<name>MUTL_STRPB</name>
<proteinExistence type="inferred from homology"/>
<protein>
    <recommendedName>
        <fullName evidence="1">DNA mismatch repair protein MutL</fullName>
    </recommendedName>
</protein>
<accession>Q1J9C2</accession>